<gene>
    <name evidence="1" type="primary">rplJ</name>
    <name type="ordered locus">Swit_3477</name>
</gene>
<sequence>MDRAQKAELVADLKSTFEGTSVVIVTRNLGLTVAQSTALRTKMREAGASYKVSKNKLARIALEGTTYQAINDLLVGPTALATSADPVAPAKVIVDFAKTNDKLEIVGGAMGETVLDVAGVKALAELPSLDELRAKIVGLIQAPATKVVQIVQAPAGQLARVFGAYAAKEDA</sequence>
<accession>A5VC07</accession>
<proteinExistence type="inferred from homology"/>
<reference key="1">
    <citation type="journal article" date="2010" name="J. Bacteriol.">
        <title>Genome sequence of the dioxin-mineralizing bacterium Sphingomonas wittichii RW1.</title>
        <authorList>
            <person name="Miller T.R."/>
            <person name="Delcher A.L."/>
            <person name="Salzberg S.L."/>
            <person name="Saunders E."/>
            <person name="Detter J.C."/>
            <person name="Halden R.U."/>
        </authorList>
    </citation>
    <scope>NUCLEOTIDE SEQUENCE [LARGE SCALE GENOMIC DNA]</scope>
    <source>
        <strain>DSM 6014 / CCUG 31198 / JCM 15750 / NBRC 105917 / EY 4224 / RW1</strain>
    </source>
</reference>
<evidence type="ECO:0000255" key="1">
    <source>
        <dbReference type="HAMAP-Rule" id="MF_00362"/>
    </source>
</evidence>
<evidence type="ECO:0000305" key="2"/>
<name>RL10_RHIWR</name>
<protein>
    <recommendedName>
        <fullName evidence="1">Large ribosomal subunit protein uL10</fullName>
    </recommendedName>
    <alternativeName>
        <fullName evidence="2">50S ribosomal protein L10</fullName>
    </alternativeName>
</protein>
<feature type="chain" id="PRO_1000005601" description="Large ribosomal subunit protein uL10">
    <location>
        <begin position="1"/>
        <end position="171"/>
    </location>
</feature>
<comment type="function">
    <text evidence="1">Forms part of the ribosomal stalk, playing a central role in the interaction of the ribosome with GTP-bound translation factors.</text>
</comment>
<comment type="subunit">
    <text evidence="1">Part of the ribosomal stalk of the 50S ribosomal subunit. The N-terminus interacts with L11 and the large rRNA to form the base of the stalk. The C-terminus forms an elongated spine to which L12 dimers bind in a sequential fashion forming a multimeric L10(L12)X complex.</text>
</comment>
<comment type="similarity">
    <text evidence="1">Belongs to the universal ribosomal protein uL10 family.</text>
</comment>
<organism>
    <name type="scientific">Rhizorhabdus wittichii (strain DSM 6014 / CCUG 31198 / JCM 15750 / NBRC 105917 / EY 4224 / RW1)</name>
    <name type="common">Sphingomonas wittichii</name>
    <dbReference type="NCBI Taxonomy" id="392499"/>
    <lineage>
        <taxon>Bacteria</taxon>
        <taxon>Pseudomonadati</taxon>
        <taxon>Pseudomonadota</taxon>
        <taxon>Alphaproteobacteria</taxon>
        <taxon>Sphingomonadales</taxon>
        <taxon>Sphingomonadaceae</taxon>
        <taxon>Rhizorhabdus</taxon>
    </lineage>
</organism>
<dbReference type="EMBL" id="CP000699">
    <property type="protein sequence ID" value="ABQ69823.1"/>
    <property type="molecule type" value="Genomic_DNA"/>
</dbReference>
<dbReference type="SMR" id="A5VC07"/>
<dbReference type="STRING" id="392499.Swit_3477"/>
<dbReference type="PaxDb" id="392499-Swit_3477"/>
<dbReference type="KEGG" id="swi:Swit_3477"/>
<dbReference type="eggNOG" id="COG0244">
    <property type="taxonomic scope" value="Bacteria"/>
</dbReference>
<dbReference type="HOGENOM" id="CLU_092227_0_0_5"/>
<dbReference type="OrthoDB" id="9791972at2"/>
<dbReference type="Proteomes" id="UP000001989">
    <property type="component" value="Chromosome"/>
</dbReference>
<dbReference type="GO" id="GO:0015934">
    <property type="term" value="C:large ribosomal subunit"/>
    <property type="evidence" value="ECO:0007669"/>
    <property type="project" value="InterPro"/>
</dbReference>
<dbReference type="GO" id="GO:0070180">
    <property type="term" value="F:large ribosomal subunit rRNA binding"/>
    <property type="evidence" value="ECO:0007669"/>
    <property type="project" value="UniProtKB-UniRule"/>
</dbReference>
<dbReference type="GO" id="GO:0003735">
    <property type="term" value="F:structural constituent of ribosome"/>
    <property type="evidence" value="ECO:0007669"/>
    <property type="project" value="InterPro"/>
</dbReference>
<dbReference type="GO" id="GO:0006412">
    <property type="term" value="P:translation"/>
    <property type="evidence" value="ECO:0007669"/>
    <property type="project" value="UniProtKB-UniRule"/>
</dbReference>
<dbReference type="CDD" id="cd05797">
    <property type="entry name" value="Ribosomal_L10"/>
    <property type="match status" value="1"/>
</dbReference>
<dbReference type="Gene3D" id="3.30.70.1730">
    <property type="match status" value="1"/>
</dbReference>
<dbReference type="Gene3D" id="6.10.250.290">
    <property type="match status" value="1"/>
</dbReference>
<dbReference type="HAMAP" id="MF_00362">
    <property type="entry name" value="Ribosomal_uL10"/>
    <property type="match status" value="1"/>
</dbReference>
<dbReference type="InterPro" id="IPR001790">
    <property type="entry name" value="Ribosomal_uL10"/>
</dbReference>
<dbReference type="InterPro" id="IPR043141">
    <property type="entry name" value="Ribosomal_uL10-like_sf"/>
</dbReference>
<dbReference type="InterPro" id="IPR022973">
    <property type="entry name" value="Ribosomal_uL10_bac"/>
</dbReference>
<dbReference type="InterPro" id="IPR047865">
    <property type="entry name" value="Ribosomal_uL10_bac_type"/>
</dbReference>
<dbReference type="InterPro" id="IPR002363">
    <property type="entry name" value="Ribosomal_uL10_CS_bac"/>
</dbReference>
<dbReference type="NCBIfam" id="NF000955">
    <property type="entry name" value="PRK00099.1-1"/>
    <property type="match status" value="1"/>
</dbReference>
<dbReference type="PANTHER" id="PTHR11560">
    <property type="entry name" value="39S RIBOSOMAL PROTEIN L10, MITOCHONDRIAL"/>
    <property type="match status" value="1"/>
</dbReference>
<dbReference type="Pfam" id="PF00466">
    <property type="entry name" value="Ribosomal_L10"/>
    <property type="match status" value="1"/>
</dbReference>
<dbReference type="SUPFAM" id="SSF160369">
    <property type="entry name" value="Ribosomal protein L10-like"/>
    <property type="match status" value="1"/>
</dbReference>
<dbReference type="PROSITE" id="PS01109">
    <property type="entry name" value="RIBOSOMAL_L10"/>
    <property type="match status" value="1"/>
</dbReference>
<keyword id="KW-1185">Reference proteome</keyword>
<keyword id="KW-0687">Ribonucleoprotein</keyword>
<keyword id="KW-0689">Ribosomal protein</keyword>
<keyword id="KW-0694">RNA-binding</keyword>
<keyword id="KW-0699">rRNA-binding</keyword>